<name>THIC_FUSNN</name>
<reference key="1">
    <citation type="journal article" date="2002" name="J. Bacteriol.">
        <title>Genome sequence and analysis of the oral bacterium Fusobacterium nucleatum strain ATCC 25586.</title>
        <authorList>
            <person name="Kapatral V."/>
            <person name="Anderson I."/>
            <person name="Ivanova N."/>
            <person name="Reznik G."/>
            <person name="Los T."/>
            <person name="Lykidis A."/>
            <person name="Bhattacharyya A."/>
            <person name="Bartman A."/>
            <person name="Gardner W."/>
            <person name="Grechkin G."/>
            <person name="Zhu L."/>
            <person name="Vasieva O."/>
            <person name="Chu L."/>
            <person name="Kogan Y."/>
            <person name="Chaga O."/>
            <person name="Goltsman E."/>
            <person name="Bernal A."/>
            <person name="Larsen N."/>
            <person name="D'Souza M."/>
            <person name="Walunas T."/>
            <person name="Pusch G."/>
            <person name="Haselkorn R."/>
            <person name="Fonstein M."/>
            <person name="Kyrpides N.C."/>
            <person name="Overbeek R."/>
        </authorList>
    </citation>
    <scope>NUCLEOTIDE SEQUENCE [LARGE SCALE GENOMIC DNA]</scope>
    <source>
        <strain>ATCC 25586 / DSM 15643 / BCRC 10681 / CIP 101130 / JCM 8532 / KCTC 2640 / LMG 13131 / VPI 4355</strain>
    </source>
</reference>
<comment type="function">
    <text evidence="1">Catalyzes the synthesis of the hydroxymethylpyrimidine phosphate (HMP-P) moiety of thiamine from aminoimidazole ribotide (AIR) in a radical S-adenosyl-L-methionine (SAM)-dependent reaction.</text>
</comment>
<comment type="catalytic activity">
    <reaction evidence="1">
        <text>5-amino-1-(5-phospho-beta-D-ribosyl)imidazole + S-adenosyl-L-methionine = 4-amino-2-methyl-5-(phosphooxymethyl)pyrimidine + CO + 5'-deoxyadenosine + formate + L-methionine + 3 H(+)</text>
        <dbReference type="Rhea" id="RHEA:24840"/>
        <dbReference type="ChEBI" id="CHEBI:15378"/>
        <dbReference type="ChEBI" id="CHEBI:15740"/>
        <dbReference type="ChEBI" id="CHEBI:17245"/>
        <dbReference type="ChEBI" id="CHEBI:17319"/>
        <dbReference type="ChEBI" id="CHEBI:57844"/>
        <dbReference type="ChEBI" id="CHEBI:58354"/>
        <dbReference type="ChEBI" id="CHEBI:59789"/>
        <dbReference type="ChEBI" id="CHEBI:137981"/>
        <dbReference type="EC" id="4.1.99.17"/>
    </reaction>
</comment>
<comment type="cofactor">
    <cofactor evidence="1">
        <name>[4Fe-4S] cluster</name>
        <dbReference type="ChEBI" id="CHEBI:49883"/>
    </cofactor>
    <text evidence="1">Binds 1 [4Fe-4S] cluster per subunit. The cluster is coordinated with 3 cysteines and an exchangeable S-adenosyl-L-methionine.</text>
</comment>
<comment type="pathway">
    <text evidence="1">Cofactor biosynthesis; thiamine diphosphate biosynthesis.</text>
</comment>
<comment type="similarity">
    <text evidence="1">Belongs to the ThiC family.</text>
</comment>
<feature type="chain" id="PRO_0000152807" description="Phosphomethylpyrimidine synthase">
    <location>
        <begin position="1"/>
        <end position="433"/>
    </location>
</feature>
<feature type="binding site" evidence="1">
    <location>
        <position position="68"/>
    </location>
    <ligand>
        <name>substrate</name>
    </ligand>
</feature>
<feature type="binding site" evidence="1">
    <location>
        <position position="97"/>
    </location>
    <ligand>
        <name>substrate</name>
    </ligand>
</feature>
<feature type="binding site" evidence="1">
    <location>
        <position position="126"/>
    </location>
    <ligand>
        <name>substrate</name>
    </ligand>
</feature>
<feature type="binding site" evidence="1">
    <location>
        <position position="162"/>
    </location>
    <ligand>
        <name>substrate</name>
    </ligand>
</feature>
<feature type="binding site" evidence="1">
    <location>
        <begin position="184"/>
        <end position="186"/>
    </location>
    <ligand>
        <name>substrate</name>
    </ligand>
</feature>
<feature type="binding site" evidence="1">
    <location>
        <begin position="225"/>
        <end position="228"/>
    </location>
    <ligand>
        <name>substrate</name>
    </ligand>
</feature>
<feature type="binding site" evidence="1">
    <location>
        <position position="264"/>
    </location>
    <ligand>
        <name>substrate</name>
    </ligand>
</feature>
<feature type="binding site" evidence="1">
    <location>
        <position position="268"/>
    </location>
    <ligand>
        <name>Zn(2+)</name>
        <dbReference type="ChEBI" id="CHEBI:29105"/>
    </ligand>
</feature>
<feature type="binding site" evidence="1">
    <location>
        <position position="291"/>
    </location>
    <ligand>
        <name>substrate</name>
    </ligand>
</feature>
<feature type="binding site" evidence="1">
    <location>
        <position position="332"/>
    </location>
    <ligand>
        <name>Zn(2+)</name>
        <dbReference type="ChEBI" id="CHEBI:29105"/>
    </ligand>
</feature>
<feature type="binding site" evidence="1">
    <location>
        <position position="408"/>
    </location>
    <ligand>
        <name>[4Fe-4S] cluster</name>
        <dbReference type="ChEBI" id="CHEBI:49883"/>
        <note>4Fe-4S-S-AdoMet</note>
    </ligand>
</feature>
<feature type="binding site" evidence="1">
    <location>
        <position position="411"/>
    </location>
    <ligand>
        <name>[4Fe-4S] cluster</name>
        <dbReference type="ChEBI" id="CHEBI:49883"/>
        <note>4Fe-4S-S-AdoMet</note>
    </ligand>
</feature>
<feature type="binding site" evidence="1">
    <location>
        <position position="415"/>
    </location>
    <ligand>
        <name>[4Fe-4S] cluster</name>
        <dbReference type="ChEBI" id="CHEBI:49883"/>
        <note>4Fe-4S-S-AdoMet</note>
    </ligand>
</feature>
<dbReference type="EC" id="4.1.99.17" evidence="1"/>
<dbReference type="EMBL" id="AE009951">
    <property type="protein sequence ID" value="AAL93872.1"/>
    <property type="molecule type" value="Genomic_DNA"/>
</dbReference>
<dbReference type="RefSeq" id="NP_602573.1">
    <property type="nucleotide sequence ID" value="NC_003454.1"/>
</dbReference>
<dbReference type="RefSeq" id="WP_011015816.1">
    <property type="nucleotide sequence ID" value="NZ_CP028101.1"/>
</dbReference>
<dbReference type="SMR" id="Q8RI60"/>
<dbReference type="FunCoup" id="Q8RI60">
    <property type="interactions" value="298"/>
</dbReference>
<dbReference type="STRING" id="190304.FN1757"/>
<dbReference type="PaxDb" id="190304-FN1757"/>
<dbReference type="EnsemblBacteria" id="AAL93872">
    <property type="protein sequence ID" value="AAL93872"/>
    <property type="gene ID" value="FN1757"/>
</dbReference>
<dbReference type="GeneID" id="79782685"/>
<dbReference type="KEGG" id="fnu:FN1757"/>
<dbReference type="PATRIC" id="fig|190304.8.peg.247"/>
<dbReference type="eggNOG" id="COG0422">
    <property type="taxonomic scope" value="Bacteria"/>
</dbReference>
<dbReference type="HOGENOM" id="CLU_013181_2_2_0"/>
<dbReference type="InParanoid" id="Q8RI60"/>
<dbReference type="BioCyc" id="FNUC190304:G1FZS-255-MONOMER"/>
<dbReference type="UniPathway" id="UPA00060"/>
<dbReference type="Proteomes" id="UP000002521">
    <property type="component" value="Chromosome"/>
</dbReference>
<dbReference type="GO" id="GO:0005829">
    <property type="term" value="C:cytosol"/>
    <property type="evidence" value="ECO:0000318"/>
    <property type="project" value="GO_Central"/>
</dbReference>
<dbReference type="GO" id="GO:0051539">
    <property type="term" value="F:4 iron, 4 sulfur cluster binding"/>
    <property type="evidence" value="ECO:0007669"/>
    <property type="project" value="UniProtKB-KW"/>
</dbReference>
<dbReference type="GO" id="GO:0016830">
    <property type="term" value="F:carbon-carbon lyase activity"/>
    <property type="evidence" value="ECO:0007669"/>
    <property type="project" value="InterPro"/>
</dbReference>
<dbReference type="GO" id="GO:0008270">
    <property type="term" value="F:zinc ion binding"/>
    <property type="evidence" value="ECO:0007669"/>
    <property type="project" value="UniProtKB-UniRule"/>
</dbReference>
<dbReference type="GO" id="GO:0009228">
    <property type="term" value="P:thiamine biosynthetic process"/>
    <property type="evidence" value="ECO:0000318"/>
    <property type="project" value="GO_Central"/>
</dbReference>
<dbReference type="GO" id="GO:0009229">
    <property type="term" value="P:thiamine diphosphate biosynthetic process"/>
    <property type="evidence" value="ECO:0007669"/>
    <property type="project" value="UniProtKB-UniRule"/>
</dbReference>
<dbReference type="FunFam" id="3.20.20.540:FF:000001">
    <property type="entry name" value="Phosphomethylpyrimidine synthase"/>
    <property type="match status" value="1"/>
</dbReference>
<dbReference type="Gene3D" id="6.10.250.620">
    <property type="match status" value="1"/>
</dbReference>
<dbReference type="Gene3D" id="3.20.20.540">
    <property type="entry name" value="Radical SAM ThiC family, central domain"/>
    <property type="match status" value="1"/>
</dbReference>
<dbReference type="HAMAP" id="MF_00089">
    <property type="entry name" value="ThiC"/>
    <property type="match status" value="1"/>
</dbReference>
<dbReference type="InterPro" id="IPR037509">
    <property type="entry name" value="ThiC"/>
</dbReference>
<dbReference type="InterPro" id="IPR038521">
    <property type="entry name" value="ThiC/Bza_core_dom"/>
</dbReference>
<dbReference type="InterPro" id="IPR002817">
    <property type="entry name" value="ThiC/BzaA/B"/>
</dbReference>
<dbReference type="NCBIfam" id="NF009895">
    <property type="entry name" value="PRK13352.1"/>
    <property type="match status" value="1"/>
</dbReference>
<dbReference type="NCBIfam" id="TIGR00190">
    <property type="entry name" value="thiC"/>
    <property type="match status" value="1"/>
</dbReference>
<dbReference type="PANTHER" id="PTHR30557:SF1">
    <property type="entry name" value="PHOSPHOMETHYLPYRIMIDINE SYNTHASE, CHLOROPLASTIC"/>
    <property type="match status" value="1"/>
</dbReference>
<dbReference type="PANTHER" id="PTHR30557">
    <property type="entry name" value="THIAMINE BIOSYNTHESIS PROTEIN THIC"/>
    <property type="match status" value="1"/>
</dbReference>
<dbReference type="Pfam" id="PF01964">
    <property type="entry name" value="ThiC_Rad_SAM"/>
    <property type="match status" value="1"/>
</dbReference>
<dbReference type="SFLD" id="SFLDF00407">
    <property type="entry name" value="phosphomethylpyrimidine_syntha"/>
    <property type="match status" value="1"/>
</dbReference>
<dbReference type="SFLD" id="SFLDG01114">
    <property type="entry name" value="phosphomethylpyrimidine_syntha"/>
    <property type="match status" value="1"/>
</dbReference>
<dbReference type="SFLD" id="SFLDS00113">
    <property type="entry name" value="Radical_SAM_Phosphomethylpyrim"/>
    <property type="match status" value="1"/>
</dbReference>
<sequence length="433" mass="48269">MYKTQMEAAKKGILTKEMKSIAESESIDEKVLMERVASGEITIPANKKHSSLLAKGVGTGLSTKINVNLGISKDCPNVDKELEKVKVAIDMKVDAIMDLSSFGKTEEFRKKLITMSTAMVGTVPVYDAIGFYDKELKDIKAEEFLDVVRKHAEDGVDFVTIHAGLNREAVNLFKRNERITNIVSRGGSLMYAWMELNNAENPFYENFDKLLDICEEYDMTISLGDALRPGCLNDATDACQIKELITLGELTKRAWERNVQIIIEGPGHMAIDEIEANVKLEKKLCHNAPFYVLGPLVTDIAPGYDHITSAIGGAIAAAAGVDFLCYVTPAEHLRLPDLDDMKEGIIASRIAAHAADISKKVPKAIDWDNRMAKYRTDIDWEGMFTEAIDEEKARRYRKESTPENEDTCTMCGKMCSMRTMKKMMSGEDVNILK</sequence>
<gene>
    <name evidence="1" type="primary">thiC</name>
    <name type="ordered locus">FN1757</name>
</gene>
<keyword id="KW-0004">4Fe-4S</keyword>
<keyword id="KW-0408">Iron</keyword>
<keyword id="KW-0411">Iron-sulfur</keyword>
<keyword id="KW-0456">Lyase</keyword>
<keyword id="KW-0479">Metal-binding</keyword>
<keyword id="KW-1185">Reference proteome</keyword>
<keyword id="KW-0949">S-adenosyl-L-methionine</keyword>
<keyword id="KW-0784">Thiamine biosynthesis</keyword>
<keyword id="KW-0862">Zinc</keyword>
<organism>
    <name type="scientific">Fusobacterium nucleatum subsp. nucleatum (strain ATCC 25586 / DSM 15643 / BCRC 10681 / CIP 101130 / JCM 8532 / KCTC 2640 / LMG 13131 / VPI 4355)</name>
    <dbReference type="NCBI Taxonomy" id="190304"/>
    <lineage>
        <taxon>Bacteria</taxon>
        <taxon>Fusobacteriati</taxon>
        <taxon>Fusobacteriota</taxon>
        <taxon>Fusobacteriia</taxon>
        <taxon>Fusobacteriales</taxon>
        <taxon>Fusobacteriaceae</taxon>
        <taxon>Fusobacterium</taxon>
    </lineage>
</organism>
<proteinExistence type="inferred from homology"/>
<evidence type="ECO:0000255" key="1">
    <source>
        <dbReference type="HAMAP-Rule" id="MF_00089"/>
    </source>
</evidence>
<protein>
    <recommendedName>
        <fullName evidence="1">Phosphomethylpyrimidine synthase</fullName>
        <ecNumber evidence="1">4.1.99.17</ecNumber>
    </recommendedName>
    <alternativeName>
        <fullName evidence="1">Hydroxymethylpyrimidine phosphate synthase</fullName>
        <shortName evidence="1">HMP-P synthase</shortName>
        <shortName evidence="1">HMP-phosphate synthase</shortName>
        <shortName evidence="1">HMPP synthase</shortName>
    </alternativeName>
    <alternativeName>
        <fullName evidence="1">Thiamine biosynthesis protein ThiC</fullName>
    </alternativeName>
</protein>
<accession>Q8RI60</accession>